<evidence type="ECO:0000250" key="1"/>
<evidence type="ECO:0000255" key="2"/>
<evidence type="ECO:0000255" key="3">
    <source>
        <dbReference type="PROSITE-ProRule" id="PRU00186"/>
    </source>
</evidence>
<evidence type="ECO:0000256" key="4">
    <source>
        <dbReference type="SAM" id="MobiDB-lite"/>
    </source>
</evidence>
<accession>Q8AYC1</accession>
<sequence length="1067" mass="117093">MIDSSKKQQQQPPQHYSFADILSAGDLDPLKEKEWLDPGSQKSLKEVLQLRLQQRRTREQLVDQGIMPPLKSPAAFHEQIKSLERARTENFLKHKIRSRPNRSELVRMHILEETLAEPSLQATQLKLKRARLADDLNEKIAQRPGPLELVEKNILPVDLSVKEAITVSQTNLPENLDTLSFDEDSSDALSPEQPASQESQGSAASPGEMKTSDSSSPVSNTTIQCQTVSSPLPDFFKPVPTADLTTRSPLSCIVSKPGPALIKQTQPKHTEKPRSKKSKDPKPRVKKLKYHQYIPPDQKGEKIEEEMDSNYARLLQQQQLVLQLQILSQQHSTLTTSRKSYPAPLKSQKKQNTINTTICNGNAGAPPAQCSVNRQNSVPCKKTGPLPSSLDDMKVAELKMELKLRGLPVSGTKMDLIERLKPFQDFSSNGVSPSSANTVNITNPACNTTDDATTAFSTSALINSSSPTPSVSIGNNQTMLDGINSPLPMSPTPSEQSNFSSEDTNITDTFAEILTMMSPSQFMNTSPLKVNEDSMGATPGNTPNVELDAVEKDRKLQEKEKQIEELKRKLEQEQKLVEVLKKQLELEKRGQQQQPCSNVLLKMEPKHFNLQIKEETEAPDCQNSKQPVGSGGQILGQATAATISQNIIANNAVVIKHEVPLAKPEHQNVIQQFYVTSQRPPQTAVVAQPQALLATQTAQLLLPLSIKAANGVQLSMVQAQPHTVNPAPAQLSTAAATTTTLLSAPPKQSAPPTQDKFTPHLLNQNQQIRKLCPSATSGNVFSYPQNPVTAVPQSFSASISTSAQPQRSTQLTAVQNGPTSLHEKSSTPPQLQQFIVQQHPLFSSPTTKSKDPPRYEEAIKQARNNPASQPEVSNAHSQQMDDLFDILIKSGEMSPLIKEPSPISKMRPVTANVTTMPVNTVVSRPPPQIHMAPPLSLESTNSLSVSLESQLEAFLDGTLPSGNNIPHLESNSDDRETFSLIDDLNNDLLQNTAMLEHESTPMETTDTPFTANSCLSLDLADANLDNMEWLDLTMPNSSSSLTPLSSTLPSMFSTDFLDSNDLHLHWE</sequence>
<comment type="function">
    <text evidence="1">Poor transcriptional factor which uses the canonical single or multiple CArG boxes DNA sequence. Acts as a cofactor of serum response factor (SRF) with the potential to modulate SRF target genes (By similarity).</text>
</comment>
<comment type="subunit">
    <text evidence="1">Interacts with SRF.</text>
</comment>
<comment type="subcellular location">
    <subcellularLocation>
        <location evidence="1">Nucleus</location>
    </subcellularLocation>
</comment>
<comment type="domain">
    <text evidence="1">The N-terminal region is required for nuclear localization and the C-terminal region mediates transcriptional activity.</text>
</comment>
<reference key="1">
    <citation type="journal article" date="2002" name="Proc. Natl. Acad. Sci. U.S.A.">
        <title>Potentiation of serum response factor activity by a family of myocardin-related transcription factors.</title>
        <authorList>
            <person name="Wang D.-Z."/>
            <person name="Li S."/>
            <person name="Hockemeyer D."/>
            <person name="Sutherland L."/>
            <person name="Wang Z."/>
            <person name="Schratt G."/>
            <person name="Richardson J.A."/>
            <person name="Nordheim A."/>
            <person name="Olson E.N."/>
        </authorList>
    </citation>
    <scope>NUCLEOTIDE SEQUENCE [MRNA]</scope>
</reference>
<keyword id="KW-0175">Coiled coil</keyword>
<keyword id="KW-0539">Nucleus</keyword>
<keyword id="KW-1185">Reference proteome</keyword>
<keyword id="KW-0677">Repeat</keyword>
<keyword id="KW-0804">Transcription</keyword>
<keyword id="KW-0805">Transcription regulation</keyword>
<name>MRTFB_XENLA</name>
<proteinExistence type="evidence at transcript level"/>
<protein>
    <recommendedName>
        <fullName>Myocardin-related transcription factor B</fullName>
        <shortName>MRTF-B</shortName>
        <shortName>xMRTF-B</shortName>
    </recommendedName>
</protein>
<feature type="chain" id="PRO_0000126630" description="Myocardin-related transcription factor B">
    <location>
        <begin position="1"/>
        <end position="1067"/>
    </location>
</feature>
<feature type="repeat" description="RPEL 1">
    <location>
        <begin position="46"/>
        <end position="71"/>
    </location>
</feature>
<feature type="repeat" description="RPEL 2">
    <location>
        <begin position="90"/>
        <end position="115"/>
    </location>
</feature>
<feature type="repeat" description="RPEL 3">
    <location>
        <begin position="134"/>
        <end position="159"/>
    </location>
</feature>
<feature type="domain" description="SAP" evidence="3">
    <location>
        <begin position="390"/>
        <end position="424"/>
    </location>
</feature>
<feature type="region of interest" description="Disordered" evidence="4">
    <location>
        <begin position="175"/>
        <end position="223"/>
    </location>
</feature>
<feature type="region of interest" description="Disordered" evidence="4">
    <location>
        <begin position="249"/>
        <end position="286"/>
    </location>
</feature>
<feature type="region of interest" description="Disordered" evidence="4">
    <location>
        <begin position="799"/>
        <end position="829"/>
    </location>
</feature>
<feature type="coiled-coil region" evidence="2">
    <location>
        <begin position="540"/>
        <end position="594"/>
    </location>
</feature>
<feature type="compositionally biased region" description="Polar residues" evidence="4">
    <location>
        <begin position="193"/>
        <end position="203"/>
    </location>
</feature>
<feature type="compositionally biased region" description="Polar residues" evidence="4">
    <location>
        <begin position="212"/>
        <end position="223"/>
    </location>
</feature>
<feature type="compositionally biased region" description="Basic and acidic residues" evidence="4">
    <location>
        <begin position="268"/>
        <end position="283"/>
    </location>
</feature>
<feature type="compositionally biased region" description="Polar residues" evidence="4">
    <location>
        <begin position="799"/>
        <end position="819"/>
    </location>
</feature>
<dbReference type="EMBL" id="AF532600">
    <property type="protein sequence ID" value="AAN33044.1"/>
    <property type="molecule type" value="mRNA"/>
</dbReference>
<dbReference type="RefSeq" id="NP_001079234.1">
    <property type="nucleotide sequence ID" value="NM_001085765.1"/>
</dbReference>
<dbReference type="SMR" id="Q8AYC1"/>
<dbReference type="AGR" id="Xenbase:XB-GENE-865719"/>
<dbReference type="Xenbase" id="XB-GENE-865719">
    <property type="gene designation" value="mrtfb.S"/>
</dbReference>
<dbReference type="OrthoDB" id="197676at2759"/>
<dbReference type="Proteomes" id="UP000186698">
    <property type="component" value="Unplaced"/>
</dbReference>
<dbReference type="GO" id="GO:0005634">
    <property type="term" value="C:nucleus"/>
    <property type="evidence" value="ECO:0000318"/>
    <property type="project" value="GO_Central"/>
</dbReference>
<dbReference type="GO" id="GO:0003713">
    <property type="term" value="F:transcription coactivator activity"/>
    <property type="evidence" value="ECO:0000318"/>
    <property type="project" value="GO_Central"/>
</dbReference>
<dbReference type="GO" id="GO:0045944">
    <property type="term" value="P:positive regulation of transcription by RNA polymerase II"/>
    <property type="evidence" value="ECO:0000318"/>
    <property type="project" value="GO_Central"/>
</dbReference>
<dbReference type="GO" id="GO:0051145">
    <property type="term" value="P:smooth muscle cell differentiation"/>
    <property type="evidence" value="ECO:0000318"/>
    <property type="project" value="GO_Central"/>
</dbReference>
<dbReference type="FunFam" id="1.10.720.30:FF:000002">
    <property type="entry name" value="Myocardin related transcription factor A"/>
    <property type="match status" value="1"/>
</dbReference>
<dbReference type="Gene3D" id="6.10.140.2040">
    <property type="match status" value="1"/>
</dbReference>
<dbReference type="Gene3D" id="6.10.150.10">
    <property type="match status" value="1"/>
</dbReference>
<dbReference type="Gene3D" id="1.10.720.30">
    <property type="entry name" value="SAP domain"/>
    <property type="match status" value="1"/>
</dbReference>
<dbReference type="InterPro" id="IPR043451">
    <property type="entry name" value="Myocardin-like"/>
</dbReference>
<dbReference type="InterPro" id="IPR004018">
    <property type="entry name" value="RPEL_repeat"/>
</dbReference>
<dbReference type="InterPro" id="IPR003034">
    <property type="entry name" value="SAP_dom"/>
</dbReference>
<dbReference type="InterPro" id="IPR036361">
    <property type="entry name" value="SAP_dom_sf"/>
</dbReference>
<dbReference type="PANTHER" id="PTHR22793:SF5">
    <property type="entry name" value="MYOCARDIN-RELATED TRANSCRIPTION FACTOR B"/>
    <property type="match status" value="1"/>
</dbReference>
<dbReference type="PANTHER" id="PTHR22793">
    <property type="entry name" value="MYOCARDIN-RELATED TRANSCRIPTION FACTOR-RELATED"/>
    <property type="match status" value="1"/>
</dbReference>
<dbReference type="Pfam" id="PF02755">
    <property type="entry name" value="RPEL"/>
    <property type="match status" value="2"/>
</dbReference>
<dbReference type="Pfam" id="PF02037">
    <property type="entry name" value="SAP"/>
    <property type="match status" value="1"/>
</dbReference>
<dbReference type="SMART" id="SM00707">
    <property type="entry name" value="RPEL"/>
    <property type="match status" value="3"/>
</dbReference>
<dbReference type="SMART" id="SM00513">
    <property type="entry name" value="SAP"/>
    <property type="match status" value="1"/>
</dbReference>
<dbReference type="SUPFAM" id="SSF68906">
    <property type="entry name" value="SAP domain"/>
    <property type="match status" value="1"/>
</dbReference>
<dbReference type="PROSITE" id="PS51073">
    <property type="entry name" value="RPEL"/>
    <property type="match status" value="3"/>
</dbReference>
<dbReference type="PROSITE" id="PS50800">
    <property type="entry name" value="SAP"/>
    <property type="match status" value="1"/>
</dbReference>
<gene>
    <name type="primary">mrtfb</name>
</gene>
<organism>
    <name type="scientific">Xenopus laevis</name>
    <name type="common">African clawed frog</name>
    <dbReference type="NCBI Taxonomy" id="8355"/>
    <lineage>
        <taxon>Eukaryota</taxon>
        <taxon>Metazoa</taxon>
        <taxon>Chordata</taxon>
        <taxon>Craniata</taxon>
        <taxon>Vertebrata</taxon>
        <taxon>Euteleostomi</taxon>
        <taxon>Amphibia</taxon>
        <taxon>Batrachia</taxon>
        <taxon>Anura</taxon>
        <taxon>Pipoidea</taxon>
        <taxon>Pipidae</taxon>
        <taxon>Xenopodinae</taxon>
        <taxon>Xenopus</taxon>
        <taxon>Xenopus</taxon>
    </lineage>
</organism>